<name>RL11_LISW6</name>
<protein>
    <recommendedName>
        <fullName evidence="1">Large ribosomal subunit protein uL11</fullName>
    </recommendedName>
    <alternativeName>
        <fullName evidence="2">50S ribosomal protein L11</fullName>
    </alternativeName>
</protein>
<evidence type="ECO:0000255" key="1">
    <source>
        <dbReference type="HAMAP-Rule" id="MF_00736"/>
    </source>
</evidence>
<evidence type="ECO:0000305" key="2"/>
<proteinExistence type="inferred from homology"/>
<gene>
    <name evidence="1" type="primary">rplK</name>
    <name type="ordered locus">lwe0211</name>
</gene>
<feature type="chain" id="PRO_1000046205" description="Large ribosomal subunit protein uL11">
    <location>
        <begin position="1"/>
        <end position="141"/>
    </location>
</feature>
<organism>
    <name type="scientific">Listeria welshimeri serovar 6b (strain ATCC 35897 / DSM 20650 / CCUG 15529 / CIP 8149 / NCTC 11857 / SLCC 5334 / V8)</name>
    <dbReference type="NCBI Taxonomy" id="386043"/>
    <lineage>
        <taxon>Bacteria</taxon>
        <taxon>Bacillati</taxon>
        <taxon>Bacillota</taxon>
        <taxon>Bacilli</taxon>
        <taxon>Bacillales</taxon>
        <taxon>Listeriaceae</taxon>
        <taxon>Listeria</taxon>
    </lineage>
</organism>
<accession>A0AF47</accession>
<dbReference type="EMBL" id="AM263198">
    <property type="protein sequence ID" value="CAK19629.1"/>
    <property type="molecule type" value="Genomic_DNA"/>
</dbReference>
<dbReference type="RefSeq" id="WP_003718336.1">
    <property type="nucleotide sequence ID" value="NC_008555.1"/>
</dbReference>
<dbReference type="SMR" id="A0AF47"/>
<dbReference type="STRING" id="386043.lwe0211"/>
<dbReference type="GeneID" id="93238162"/>
<dbReference type="KEGG" id="lwe:lwe0211"/>
<dbReference type="eggNOG" id="COG0080">
    <property type="taxonomic scope" value="Bacteria"/>
</dbReference>
<dbReference type="HOGENOM" id="CLU_074237_2_1_9"/>
<dbReference type="OrthoDB" id="9802408at2"/>
<dbReference type="Proteomes" id="UP000000779">
    <property type="component" value="Chromosome"/>
</dbReference>
<dbReference type="GO" id="GO:0022625">
    <property type="term" value="C:cytosolic large ribosomal subunit"/>
    <property type="evidence" value="ECO:0007669"/>
    <property type="project" value="TreeGrafter"/>
</dbReference>
<dbReference type="GO" id="GO:0070180">
    <property type="term" value="F:large ribosomal subunit rRNA binding"/>
    <property type="evidence" value="ECO:0007669"/>
    <property type="project" value="UniProtKB-UniRule"/>
</dbReference>
<dbReference type="GO" id="GO:0003735">
    <property type="term" value="F:structural constituent of ribosome"/>
    <property type="evidence" value="ECO:0007669"/>
    <property type="project" value="InterPro"/>
</dbReference>
<dbReference type="GO" id="GO:0006412">
    <property type="term" value="P:translation"/>
    <property type="evidence" value="ECO:0007669"/>
    <property type="project" value="UniProtKB-UniRule"/>
</dbReference>
<dbReference type="CDD" id="cd00349">
    <property type="entry name" value="Ribosomal_L11"/>
    <property type="match status" value="1"/>
</dbReference>
<dbReference type="FunFam" id="1.10.10.250:FF:000001">
    <property type="entry name" value="50S ribosomal protein L11"/>
    <property type="match status" value="1"/>
</dbReference>
<dbReference type="FunFam" id="3.30.1550.10:FF:000001">
    <property type="entry name" value="50S ribosomal protein L11"/>
    <property type="match status" value="1"/>
</dbReference>
<dbReference type="Gene3D" id="1.10.10.250">
    <property type="entry name" value="Ribosomal protein L11, C-terminal domain"/>
    <property type="match status" value="1"/>
</dbReference>
<dbReference type="Gene3D" id="3.30.1550.10">
    <property type="entry name" value="Ribosomal protein L11/L12, N-terminal domain"/>
    <property type="match status" value="1"/>
</dbReference>
<dbReference type="HAMAP" id="MF_00736">
    <property type="entry name" value="Ribosomal_uL11"/>
    <property type="match status" value="1"/>
</dbReference>
<dbReference type="InterPro" id="IPR000911">
    <property type="entry name" value="Ribosomal_uL11"/>
</dbReference>
<dbReference type="InterPro" id="IPR006519">
    <property type="entry name" value="Ribosomal_uL11_bac-typ"/>
</dbReference>
<dbReference type="InterPro" id="IPR020783">
    <property type="entry name" value="Ribosomal_uL11_C"/>
</dbReference>
<dbReference type="InterPro" id="IPR036769">
    <property type="entry name" value="Ribosomal_uL11_C_sf"/>
</dbReference>
<dbReference type="InterPro" id="IPR020784">
    <property type="entry name" value="Ribosomal_uL11_N"/>
</dbReference>
<dbReference type="InterPro" id="IPR036796">
    <property type="entry name" value="Ribosomal_uL11_N_sf"/>
</dbReference>
<dbReference type="NCBIfam" id="TIGR01632">
    <property type="entry name" value="L11_bact"/>
    <property type="match status" value="1"/>
</dbReference>
<dbReference type="PANTHER" id="PTHR11661">
    <property type="entry name" value="60S RIBOSOMAL PROTEIN L12"/>
    <property type="match status" value="1"/>
</dbReference>
<dbReference type="PANTHER" id="PTHR11661:SF1">
    <property type="entry name" value="LARGE RIBOSOMAL SUBUNIT PROTEIN UL11M"/>
    <property type="match status" value="1"/>
</dbReference>
<dbReference type="Pfam" id="PF00298">
    <property type="entry name" value="Ribosomal_L11"/>
    <property type="match status" value="1"/>
</dbReference>
<dbReference type="Pfam" id="PF03946">
    <property type="entry name" value="Ribosomal_L11_N"/>
    <property type="match status" value="1"/>
</dbReference>
<dbReference type="SMART" id="SM00649">
    <property type="entry name" value="RL11"/>
    <property type="match status" value="1"/>
</dbReference>
<dbReference type="SUPFAM" id="SSF54747">
    <property type="entry name" value="Ribosomal L11/L12e N-terminal domain"/>
    <property type="match status" value="1"/>
</dbReference>
<dbReference type="SUPFAM" id="SSF46906">
    <property type="entry name" value="Ribosomal protein L11, C-terminal domain"/>
    <property type="match status" value="1"/>
</dbReference>
<keyword id="KW-0488">Methylation</keyword>
<keyword id="KW-0687">Ribonucleoprotein</keyword>
<keyword id="KW-0689">Ribosomal protein</keyword>
<keyword id="KW-0694">RNA-binding</keyword>
<keyword id="KW-0699">rRNA-binding</keyword>
<reference key="1">
    <citation type="journal article" date="2006" name="J. Bacteriol.">
        <title>Whole-genome sequence of Listeria welshimeri reveals common steps in genome reduction with Listeria innocua as compared to Listeria monocytogenes.</title>
        <authorList>
            <person name="Hain T."/>
            <person name="Steinweg C."/>
            <person name="Kuenne C.T."/>
            <person name="Billion A."/>
            <person name="Ghai R."/>
            <person name="Chatterjee S.S."/>
            <person name="Domann E."/>
            <person name="Kaerst U."/>
            <person name="Goesmann A."/>
            <person name="Bekel T."/>
            <person name="Bartels D."/>
            <person name="Kaiser O."/>
            <person name="Meyer F."/>
            <person name="Puehler A."/>
            <person name="Weisshaar B."/>
            <person name="Wehland J."/>
            <person name="Liang C."/>
            <person name="Dandekar T."/>
            <person name="Lampidis R."/>
            <person name="Kreft J."/>
            <person name="Goebel W."/>
            <person name="Chakraborty T."/>
        </authorList>
    </citation>
    <scope>NUCLEOTIDE SEQUENCE [LARGE SCALE GENOMIC DNA]</scope>
    <source>
        <strain>ATCC 35897 / DSM 20650 / CCUG 15529 / CIP 8149 / NCTC 11857 / SLCC 5334 / V8</strain>
    </source>
</reference>
<sequence>MAKKVIKEVKLQIPAGKANPAPPVGPALGQAGVNIMGFCKEFNARTADQAGLIIPVVITVFEDRSFTFITKTPPAAVLLKKAAKVEKGSGEPNKTKVASVTRAQVQEIAETKMPDLNAANVESAMLMVEGTARSMGITIQD</sequence>
<comment type="function">
    <text evidence="1">Forms part of the ribosomal stalk which helps the ribosome interact with GTP-bound translation factors.</text>
</comment>
<comment type="subunit">
    <text evidence="1">Part of the ribosomal stalk of the 50S ribosomal subunit. Interacts with L10 and the large rRNA to form the base of the stalk. L10 forms an elongated spine to which L12 dimers bind in a sequential fashion forming a multimeric L10(L12)X complex.</text>
</comment>
<comment type="PTM">
    <text evidence="1">One or more lysine residues are methylated.</text>
</comment>
<comment type="similarity">
    <text evidence="1">Belongs to the universal ribosomal protein uL11 family.</text>
</comment>